<gene>
    <name type="primary">APOC1</name>
</gene>
<reference key="1">
    <citation type="submission" date="2018-07" db="EMBL/GenBank/DDBJ databases">
        <authorList>
            <person name="Pophaly D.S."/>
            <person name="Wolf J."/>
        </authorList>
    </citation>
    <scope>NUCLEOTIDE SEQUENCE [LARGE SCALE GENOMIC DNA]</scope>
</reference>
<reference key="2">
    <citation type="unpublished observations" date="2019-12">
        <authorList>
            <person name="Puppione D.L."/>
        </authorList>
    </citation>
    <scope>IDENTIFICATION</scope>
</reference>
<comment type="function">
    <text evidence="1 2">Inhibitor of lipoprotein binding to the low density lipoprotein (LDL) receptor, LDL receptor-related protein, and very low density lipoprotein (VLDL) receptor. Associates with high density lipoproteins (HDL) and the triacylglycerol-rich lipoproteins in the plasma and makes up about 10% of the protein of the VLDL and 2% of that of HDL. Appears to interfere directly with fatty acid uptake and is also the major plasma inhibitor of cholesteryl ester transfer protein (CETP). Binds free fatty acids and reduces their intracellular esterification. Modulates the interaction of APOE with beta-migrating VLDL and inhibits binding of beta-VLDL to the LDL receptor-related protein.</text>
</comment>
<comment type="subcellular location">
    <subcellularLocation>
        <location evidence="1">Secreted</location>
    </subcellularLocation>
</comment>
<comment type="similarity">
    <text evidence="5">Belongs to the apolipoprotein C1 family.</text>
</comment>
<evidence type="ECO:0000250" key="1">
    <source>
        <dbReference type="UniProtKB" id="P02654"/>
    </source>
</evidence>
<evidence type="ECO:0000250" key="2">
    <source>
        <dbReference type="UniProtKB" id="P33047"/>
    </source>
</evidence>
<evidence type="ECO:0000250" key="3">
    <source>
        <dbReference type="UniProtKB" id="P86336"/>
    </source>
</evidence>
<evidence type="ECO:0000255" key="4"/>
<evidence type="ECO:0000305" key="5"/>
<proteinExistence type="inferred from homology"/>
<feature type="signal peptide" evidence="4">
    <location>
        <begin position="1"/>
        <end position="26"/>
    </location>
</feature>
<feature type="chain" id="PRO_0000449199" description="Apolipoprotein C-I">
    <location>
        <begin position="27"/>
        <end position="88"/>
    </location>
</feature>
<feature type="chain" id="PRO_0000449200" description="Truncated apolipoprotein C-I" evidence="3">
    <location>
        <begin position="29"/>
        <end position="88"/>
    </location>
</feature>
<protein>
    <recommendedName>
        <fullName>Apolipoprotein C-I</fullName>
        <shortName>Apo-CI</shortName>
        <shortName>ApoC-I</shortName>
    </recommendedName>
    <alternativeName>
        <fullName>Apolipoprotein C1</fullName>
    </alternativeName>
    <component>
        <recommendedName>
            <fullName>Truncated apolipoprotein C-I</fullName>
        </recommendedName>
    </component>
</protein>
<sequence length="88" mass="9801">MRLFLSLPVLVVVLAMVLEGPAPAQAAPEISSTLERIPDKLKEFGNTLENKARAAIESIKQSDLPAKTRNWFSETFNKVKEQLKTTFS</sequence>
<keyword id="KW-0445">Lipid transport</keyword>
<keyword id="KW-0964">Secreted</keyword>
<keyword id="KW-0732">Signal</keyword>
<keyword id="KW-0813">Transport</keyword>
<keyword id="KW-0850">VLDL</keyword>
<dbReference type="EMBL" id="UIRR01000011">
    <property type="status" value="NOT_ANNOTATED_CDS"/>
    <property type="molecule type" value="Genomic_DNA"/>
</dbReference>
<dbReference type="SMR" id="P0DTT3"/>
<dbReference type="GO" id="GO:0034364">
    <property type="term" value="C:high-density lipoprotein particle"/>
    <property type="evidence" value="ECO:0007669"/>
    <property type="project" value="TreeGrafter"/>
</dbReference>
<dbReference type="GO" id="GO:0034361">
    <property type="term" value="C:very-low-density lipoprotein particle"/>
    <property type="evidence" value="ECO:0007669"/>
    <property type="project" value="UniProtKB-KW"/>
</dbReference>
<dbReference type="GO" id="GO:0005504">
    <property type="term" value="F:fatty acid binding"/>
    <property type="evidence" value="ECO:0007669"/>
    <property type="project" value="TreeGrafter"/>
</dbReference>
<dbReference type="GO" id="GO:0004859">
    <property type="term" value="F:phospholipase inhibitor activity"/>
    <property type="evidence" value="ECO:0007669"/>
    <property type="project" value="TreeGrafter"/>
</dbReference>
<dbReference type="GO" id="GO:0006869">
    <property type="term" value="P:lipid transport"/>
    <property type="evidence" value="ECO:0007669"/>
    <property type="project" value="UniProtKB-KW"/>
</dbReference>
<dbReference type="GO" id="GO:0042157">
    <property type="term" value="P:lipoprotein metabolic process"/>
    <property type="evidence" value="ECO:0007669"/>
    <property type="project" value="InterPro"/>
</dbReference>
<dbReference type="GO" id="GO:0032375">
    <property type="term" value="P:negative regulation of cholesterol transport"/>
    <property type="evidence" value="ECO:0007669"/>
    <property type="project" value="TreeGrafter"/>
</dbReference>
<dbReference type="GO" id="GO:0050995">
    <property type="term" value="P:negative regulation of lipid catabolic process"/>
    <property type="evidence" value="ECO:0007669"/>
    <property type="project" value="TreeGrafter"/>
</dbReference>
<dbReference type="GO" id="GO:0010916">
    <property type="term" value="P:negative regulation of very-low-density lipoprotein particle clearance"/>
    <property type="evidence" value="ECO:0007669"/>
    <property type="project" value="TreeGrafter"/>
</dbReference>
<dbReference type="GO" id="GO:0006641">
    <property type="term" value="P:triglyceride metabolic process"/>
    <property type="evidence" value="ECO:0007669"/>
    <property type="project" value="TreeGrafter"/>
</dbReference>
<dbReference type="GO" id="GO:0034447">
    <property type="term" value="P:very-low-density lipoprotein particle clearance"/>
    <property type="evidence" value="ECO:0007669"/>
    <property type="project" value="TreeGrafter"/>
</dbReference>
<dbReference type="Gene3D" id="4.10.260.30">
    <property type="entry name" value="Apolipoprotein C-I"/>
    <property type="match status" value="1"/>
</dbReference>
<dbReference type="InterPro" id="IPR043081">
    <property type="entry name" value="ApoC-1_sf"/>
</dbReference>
<dbReference type="InterPro" id="IPR006781">
    <property type="entry name" value="ApoC-I"/>
</dbReference>
<dbReference type="PANTHER" id="PTHR16565">
    <property type="entry name" value="APOLIPOPROTEIN C-I"/>
    <property type="match status" value="1"/>
</dbReference>
<dbReference type="PANTHER" id="PTHR16565:SF2">
    <property type="entry name" value="APOLIPOPROTEIN C-I"/>
    <property type="match status" value="1"/>
</dbReference>
<dbReference type="Pfam" id="PF04691">
    <property type="entry name" value="ApoC-I"/>
    <property type="match status" value="1"/>
</dbReference>
<organism>
    <name type="scientific">Arctocephalus gazella</name>
    <name type="common">Antarctic fur seal</name>
    <dbReference type="NCBI Taxonomy" id="37190"/>
    <lineage>
        <taxon>Eukaryota</taxon>
        <taxon>Metazoa</taxon>
        <taxon>Chordata</taxon>
        <taxon>Craniata</taxon>
        <taxon>Vertebrata</taxon>
        <taxon>Euteleostomi</taxon>
        <taxon>Mammalia</taxon>
        <taxon>Eutheria</taxon>
        <taxon>Laurasiatheria</taxon>
        <taxon>Carnivora</taxon>
        <taxon>Caniformia</taxon>
        <taxon>Pinnipedia</taxon>
        <taxon>Otariidae</taxon>
        <taxon>Arctocephalus</taxon>
    </lineage>
</organism>
<name>APOC1_ARCGZ</name>
<accession>P0DTT3</accession>